<organism>
    <name type="scientific">Coxiella burnetii (strain RSA 493 / Nine Mile phase I)</name>
    <dbReference type="NCBI Taxonomy" id="227377"/>
    <lineage>
        <taxon>Bacteria</taxon>
        <taxon>Pseudomonadati</taxon>
        <taxon>Pseudomonadota</taxon>
        <taxon>Gammaproteobacteria</taxon>
        <taxon>Legionellales</taxon>
        <taxon>Coxiellaceae</taxon>
        <taxon>Coxiella</taxon>
    </lineage>
</organism>
<reference key="1">
    <citation type="journal article" date="2003" name="Proc. Natl. Acad. Sci. U.S.A.">
        <title>Complete genome sequence of the Q-fever pathogen, Coxiella burnetii.</title>
        <authorList>
            <person name="Seshadri R."/>
            <person name="Paulsen I.T."/>
            <person name="Eisen J.A."/>
            <person name="Read T.D."/>
            <person name="Nelson K.E."/>
            <person name="Nelson W.C."/>
            <person name="Ward N.L."/>
            <person name="Tettelin H."/>
            <person name="Davidsen T.M."/>
            <person name="Beanan M.J."/>
            <person name="DeBoy R.T."/>
            <person name="Daugherty S.C."/>
            <person name="Brinkac L.M."/>
            <person name="Madupu R."/>
            <person name="Dodson R.J."/>
            <person name="Khouri H.M."/>
            <person name="Lee K.H."/>
            <person name="Carty H.A."/>
            <person name="Scanlan D."/>
            <person name="Heinzen R.A."/>
            <person name="Thompson H.A."/>
            <person name="Samuel J.E."/>
            <person name="Fraser C.M."/>
            <person name="Heidelberg J.F."/>
        </authorList>
    </citation>
    <scope>NUCLEOTIDE SEQUENCE [LARGE SCALE GENOMIC DNA]</scope>
    <source>
        <strain>RSA 493 / Nine Mile phase I</strain>
    </source>
</reference>
<keyword id="KW-0012">Acyltransferase</keyword>
<keyword id="KW-0441">Lipid A biosynthesis</keyword>
<keyword id="KW-0444">Lipid biosynthesis</keyword>
<keyword id="KW-0443">Lipid metabolism</keyword>
<keyword id="KW-1185">Reference proteome</keyword>
<keyword id="KW-0677">Repeat</keyword>
<keyword id="KW-0808">Transferase</keyword>
<proteinExistence type="inferred from homology"/>
<accession>Q83DT0</accession>
<gene>
    <name evidence="1" type="primary">lpxD</name>
    <name type="ordered locus">CBU_0613</name>
</gene>
<feature type="chain" id="PRO_0000059667" description="UDP-3-O-acylglucosamine N-acyltransferase">
    <location>
        <begin position="1"/>
        <end position="342"/>
    </location>
</feature>
<feature type="active site" description="Proton acceptor" evidence="1">
    <location>
        <position position="243"/>
    </location>
</feature>
<protein>
    <recommendedName>
        <fullName evidence="1">UDP-3-O-acylglucosamine N-acyltransferase</fullName>
        <ecNumber evidence="1">2.3.1.191</ecNumber>
    </recommendedName>
</protein>
<comment type="function">
    <text evidence="1">Catalyzes the N-acylation of UDP-3-O-acylglucosamine using 3-hydroxyacyl-ACP as the acyl donor. Is involved in the biosynthesis of lipid A, a phosphorylated glycolipid that anchors the lipopolysaccharide to the outer membrane of the cell.</text>
</comment>
<comment type="catalytic activity">
    <reaction evidence="1">
        <text>a UDP-3-O-[(3R)-3-hydroxyacyl]-alpha-D-glucosamine + a (3R)-hydroxyacyl-[ACP] = a UDP-2-N,3-O-bis[(3R)-3-hydroxyacyl]-alpha-D-glucosamine + holo-[ACP] + H(+)</text>
        <dbReference type="Rhea" id="RHEA:53836"/>
        <dbReference type="Rhea" id="RHEA-COMP:9685"/>
        <dbReference type="Rhea" id="RHEA-COMP:9945"/>
        <dbReference type="ChEBI" id="CHEBI:15378"/>
        <dbReference type="ChEBI" id="CHEBI:64479"/>
        <dbReference type="ChEBI" id="CHEBI:78827"/>
        <dbReference type="ChEBI" id="CHEBI:137740"/>
        <dbReference type="ChEBI" id="CHEBI:137748"/>
        <dbReference type="EC" id="2.3.1.191"/>
    </reaction>
</comment>
<comment type="pathway">
    <text evidence="1">Bacterial outer membrane biogenesis; LPS lipid A biosynthesis.</text>
</comment>
<comment type="subunit">
    <text evidence="1">Homotrimer.</text>
</comment>
<comment type="similarity">
    <text evidence="1">Belongs to the transferase hexapeptide repeat family. LpxD subfamily.</text>
</comment>
<evidence type="ECO:0000255" key="1">
    <source>
        <dbReference type="HAMAP-Rule" id="MF_00523"/>
    </source>
</evidence>
<dbReference type="EC" id="2.3.1.191" evidence="1"/>
<dbReference type="EMBL" id="AE016828">
    <property type="protein sequence ID" value="AAO90157.1"/>
    <property type="molecule type" value="Genomic_DNA"/>
</dbReference>
<dbReference type="RefSeq" id="NP_819643.1">
    <property type="nucleotide sequence ID" value="NC_002971.4"/>
</dbReference>
<dbReference type="RefSeq" id="WP_005771660.1">
    <property type="nucleotide sequence ID" value="NZ_CDBG01000001.1"/>
</dbReference>
<dbReference type="SMR" id="Q83DT0"/>
<dbReference type="STRING" id="227377.CBU_0613"/>
<dbReference type="EnsemblBacteria" id="AAO90157">
    <property type="protein sequence ID" value="AAO90157"/>
    <property type="gene ID" value="CBU_0613"/>
</dbReference>
<dbReference type="GeneID" id="1208498"/>
<dbReference type="KEGG" id="cbu:CBU_0613"/>
<dbReference type="PATRIC" id="fig|227377.7.peg.601"/>
<dbReference type="eggNOG" id="COG1044">
    <property type="taxonomic scope" value="Bacteria"/>
</dbReference>
<dbReference type="HOGENOM" id="CLU_049865_0_1_6"/>
<dbReference type="OrthoDB" id="9784739at2"/>
<dbReference type="UniPathway" id="UPA00973"/>
<dbReference type="Proteomes" id="UP000002671">
    <property type="component" value="Chromosome"/>
</dbReference>
<dbReference type="GO" id="GO:0016020">
    <property type="term" value="C:membrane"/>
    <property type="evidence" value="ECO:0007669"/>
    <property type="project" value="GOC"/>
</dbReference>
<dbReference type="GO" id="GO:0016410">
    <property type="term" value="F:N-acyltransferase activity"/>
    <property type="evidence" value="ECO:0007669"/>
    <property type="project" value="InterPro"/>
</dbReference>
<dbReference type="GO" id="GO:0009245">
    <property type="term" value="P:lipid A biosynthetic process"/>
    <property type="evidence" value="ECO:0007669"/>
    <property type="project" value="UniProtKB-UniRule"/>
</dbReference>
<dbReference type="CDD" id="cd03352">
    <property type="entry name" value="LbH_LpxD"/>
    <property type="match status" value="1"/>
</dbReference>
<dbReference type="Gene3D" id="1.20.5.170">
    <property type="match status" value="1"/>
</dbReference>
<dbReference type="Gene3D" id="2.160.10.10">
    <property type="entry name" value="Hexapeptide repeat proteins"/>
    <property type="match status" value="1"/>
</dbReference>
<dbReference type="Gene3D" id="3.40.1390.10">
    <property type="entry name" value="MurE/MurF, N-terminal domain"/>
    <property type="match status" value="1"/>
</dbReference>
<dbReference type="HAMAP" id="MF_00523">
    <property type="entry name" value="LpxD"/>
    <property type="match status" value="1"/>
</dbReference>
<dbReference type="InterPro" id="IPR001451">
    <property type="entry name" value="Hexapep"/>
</dbReference>
<dbReference type="InterPro" id="IPR007691">
    <property type="entry name" value="LpxD"/>
</dbReference>
<dbReference type="InterPro" id="IPR011004">
    <property type="entry name" value="Trimer_LpxA-like_sf"/>
</dbReference>
<dbReference type="InterPro" id="IPR020573">
    <property type="entry name" value="UDP_GlcNAc_AcTrfase_non-rep"/>
</dbReference>
<dbReference type="NCBIfam" id="TIGR01853">
    <property type="entry name" value="lipid_A_lpxD"/>
    <property type="match status" value="1"/>
</dbReference>
<dbReference type="NCBIfam" id="NF002060">
    <property type="entry name" value="PRK00892.1"/>
    <property type="match status" value="1"/>
</dbReference>
<dbReference type="PANTHER" id="PTHR43378">
    <property type="entry name" value="UDP-3-O-ACYLGLUCOSAMINE N-ACYLTRANSFERASE"/>
    <property type="match status" value="1"/>
</dbReference>
<dbReference type="PANTHER" id="PTHR43378:SF2">
    <property type="entry name" value="UDP-3-O-ACYLGLUCOSAMINE N-ACYLTRANSFERASE 1, MITOCHONDRIAL-RELATED"/>
    <property type="match status" value="1"/>
</dbReference>
<dbReference type="Pfam" id="PF00132">
    <property type="entry name" value="Hexapep"/>
    <property type="match status" value="3"/>
</dbReference>
<dbReference type="Pfam" id="PF14602">
    <property type="entry name" value="Hexapep_2"/>
    <property type="match status" value="1"/>
</dbReference>
<dbReference type="Pfam" id="PF04613">
    <property type="entry name" value="LpxD"/>
    <property type="match status" value="1"/>
</dbReference>
<dbReference type="SUPFAM" id="SSF51161">
    <property type="entry name" value="Trimeric LpxA-like enzymes"/>
    <property type="match status" value="1"/>
</dbReference>
<name>LPXD_COXBU</name>
<sequence>MTRGLTYSLTELATAIGATVQGDGDCKIHNVAAIAQAQPGEISFVTDRKYRKYLTQTKASAILLDEKLASRCPINALVMSNPKLGFAKLLTLLRPQSLPTGGIHPTAVVGANCQIDPSAHIGAHVVIEEDVVIGPRTLIGAGASIGRGSQIGSDCCLHSRVTLYSQTRIGDRSIIHSGAVIGADGFGLIQDEKGEWVKIPQVGRVIIGDDVEIGANATIDRGALDDTVIGNGVKIDDLVMIAHNVRIGDHTVIAGCAGVAGSTTVGRHCMIGASAGLNGHIEICDNVIITGMGMIQKSITKPGIYSSGTGMQTNREWRKSVIRFWQLDELAKRLKRLEKLIR</sequence>